<organism>
    <name type="scientific">Cupriavidus metallidurans (strain ATCC 43123 / DSM 2839 / NBRC 102507 / CH34)</name>
    <name type="common">Ralstonia metallidurans</name>
    <dbReference type="NCBI Taxonomy" id="266264"/>
    <lineage>
        <taxon>Bacteria</taxon>
        <taxon>Pseudomonadati</taxon>
        <taxon>Pseudomonadota</taxon>
        <taxon>Betaproteobacteria</taxon>
        <taxon>Burkholderiales</taxon>
        <taxon>Burkholderiaceae</taxon>
        <taxon>Cupriavidus</taxon>
    </lineage>
</organism>
<sequence>MNELEQLRQFTTVVADTGDFQLMKQYKPQDATTNPSLIFKAVQKPEYRPLLEQAVRDHHGNSGLDGVMDQLLIAFGCEILAIVPGRVSTEVDARLSFDTEATVAKARHLIGLYEQRGVARERVLIKIASTWEGIRAAEVLQRENIRCNMTLLFSLAQAVACAEAGAQLISPFVGRILDWYKKQAGEKWDPVANGGENDPGVRSVRQIYDYYKKFGYATEVMGASFRGTDQILSLAGCDLLTISPELLEQLAGGQSAVALKLSVEQAQAGNVARIAADEPAFRWQLNEDAMATEKLSEGIRLFAADAVKLEKLVGELAS</sequence>
<gene>
    <name evidence="2" type="primary">tal</name>
    <name type="ordered locus">Rmet_2089</name>
</gene>
<feature type="chain" id="PRO_1000014517" description="Transaldolase">
    <location>
        <begin position="1"/>
        <end position="318"/>
    </location>
</feature>
<feature type="active site" description="Schiff-base intermediate with substrate" evidence="2">
    <location>
        <position position="126"/>
    </location>
</feature>
<evidence type="ECO:0000250" key="1"/>
<evidence type="ECO:0000255" key="2">
    <source>
        <dbReference type="HAMAP-Rule" id="MF_00492"/>
    </source>
</evidence>
<accession>Q1LLK8</accession>
<dbReference type="EC" id="2.2.1.2" evidence="2"/>
<dbReference type="EMBL" id="CP000352">
    <property type="protein sequence ID" value="ABF08968.1"/>
    <property type="molecule type" value="Genomic_DNA"/>
</dbReference>
<dbReference type="RefSeq" id="WP_011516802.1">
    <property type="nucleotide sequence ID" value="NC_007973.1"/>
</dbReference>
<dbReference type="SMR" id="Q1LLK8"/>
<dbReference type="STRING" id="266264.Rmet_2089"/>
<dbReference type="KEGG" id="rme:Rmet_2089"/>
<dbReference type="eggNOG" id="COG0176">
    <property type="taxonomic scope" value="Bacteria"/>
</dbReference>
<dbReference type="HOGENOM" id="CLU_047470_0_1_4"/>
<dbReference type="UniPathway" id="UPA00115">
    <property type="reaction ID" value="UER00414"/>
</dbReference>
<dbReference type="Proteomes" id="UP000002429">
    <property type="component" value="Chromosome"/>
</dbReference>
<dbReference type="GO" id="GO:0005737">
    <property type="term" value="C:cytoplasm"/>
    <property type="evidence" value="ECO:0007669"/>
    <property type="project" value="UniProtKB-SubCell"/>
</dbReference>
<dbReference type="GO" id="GO:0004801">
    <property type="term" value="F:transaldolase activity"/>
    <property type="evidence" value="ECO:0000250"/>
    <property type="project" value="UniProtKB"/>
</dbReference>
<dbReference type="GO" id="GO:0005975">
    <property type="term" value="P:carbohydrate metabolic process"/>
    <property type="evidence" value="ECO:0007669"/>
    <property type="project" value="InterPro"/>
</dbReference>
<dbReference type="GO" id="GO:0006098">
    <property type="term" value="P:pentose-phosphate shunt"/>
    <property type="evidence" value="ECO:0007669"/>
    <property type="project" value="UniProtKB-UniRule"/>
</dbReference>
<dbReference type="CDD" id="cd00957">
    <property type="entry name" value="Transaldolase_TalAB"/>
    <property type="match status" value="1"/>
</dbReference>
<dbReference type="FunFam" id="3.20.20.70:FF:000002">
    <property type="entry name" value="Transaldolase"/>
    <property type="match status" value="1"/>
</dbReference>
<dbReference type="Gene3D" id="3.20.20.70">
    <property type="entry name" value="Aldolase class I"/>
    <property type="match status" value="1"/>
</dbReference>
<dbReference type="HAMAP" id="MF_00492">
    <property type="entry name" value="Transaldolase_1"/>
    <property type="match status" value="1"/>
</dbReference>
<dbReference type="InterPro" id="IPR013785">
    <property type="entry name" value="Aldolase_TIM"/>
</dbReference>
<dbReference type="InterPro" id="IPR001585">
    <property type="entry name" value="TAL/FSA"/>
</dbReference>
<dbReference type="InterPro" id="IPR004730">
    <property type="entry name" value="Transaldolase_1"/>
</dbReference>
<dbReference type="InterPro" id="IPR018225">
    <property type="entry name" value="Transaldolase_AS"/>
</dbReference>
<dbReference type="NCBIfam" id="TIGR00874">
    <property type="entry name" value="talAB"/>
    <property type="match status" value="1"/>
</dbReference>
<dbReference type="PANTHER" id="PTHR10683">
    <property type="entry name" value="TRANSALDOLASE"/>
    <property type="match status" value="1"/>
</dbReference>
<dbReference type="PANTHER" id="PTHR10683:SF18">
    <property type="entry name" value="TRANSALDOLASE"/>
    <property type="match status" value="1"/>
</dbReference>
<dbReference type="Pfam" id="PF00923">
    <property type="entry name" value="TAL_FSA"/>
    <property type="match status" value="1"/>
</dbReference>
<dbReference type="SUPFAM" id="SSF51569">
    <property type="entry name" value="Aldolase"/>
    <property type="match status" value="1"/>
</dbReference>
<dbReference type="PROSITE" id="PS01054">
    <property type="entry name" value="TRANSALDOLASE_1"/>
    <property type="match status" value="1"/>
</dbReference>
<dbReference type="PROSITE" id="PS00958">
    <property type="entry name" value="TRANSALDOLASE_2"/>
    <property type="match status" value="1"/>
</dbReference>
<comment type="function">
    <text evidence="2">Transaldolase is important for the balance of metabolites in the pentose-phosphate pathway.</text>
</comment>
<comment type="catalytic activity">
    <reaction evidence="2">
        <text>D-sedoheptulose 7-phosphate + D-glyceraldehyde 3-phosphate = D-erythrose 4-phosphate + beta-D-fructose 6-phosphate</text>
        <dbReference type="Rhea" id="RHEA:17053"/>
        <dbReference type="ChEBI" id="CHEBI:16897"/>
        <dbReference type="ChEBI" id="CHEBI:57483"/>
        <dbReference type="ChEBI" id="CHEBI:57634"/>
        <dbReference type="ChEBI" id="CHEBI:59776"/>
        <dbReference type="EC" id="2.2.1.2"/>
    </reaction>
</comment>
<comment type="pathway">
    <text evidence="2">Carbohydrate degradation; pentose phosphate pathway; D-glyceraldehyde 3-phosphate and beta-D-fructose 6-phosphate from D-ribose 5-phosphate and D-xylulose 5-phosphate (non-oxidative stage): step 2/3.</text>
</comment>
<comment type="subunit">
    <text evidence="1">Homodimer.</text>
</comment>
<comment type="subcellular location">
    <subcellularLocation>
        <location evidence="2">Cytoplasm</location>
    </subcellularLocation>
</comment>
<comment type="similarity">
    <text evidence="2">Belongs to the transaldolase family. Type 1 subfamily.</text>
</comment>
<keyword id="KW-0963">Cytoplasm</keyword>
<keyword id="KW-0570">Pentose shunt</keyword>
<keyword id="KW-1185">Reference proteome</keyword>
<keyword id="KW-0704">Schiff base</keyword>
<keyword id="KW-0808">Transferase</keyword>
<protein>
    <recommendedName>
        <fullName evidence="2">Transaldolase</fullName>
        <ecNumber evidence="2">2.2.1.2</ecNumber>
    </recommendedName>
</protein>
<name>TAL_CUPMC</name>
<proteinExistence type="inferred from homology"/>
<reference key="1">
    <citation type="journal article" date="2010" name="PLoS ONE">
        <title>The complete genome sequence of Cupriavidus metallidurans strain CH34, a master survivalist in harsh and anthropogenic environments.</title>
        <authorList>
            <person name="Janssen P.J."/>
            <person name="Van Houdt R."/>
            <person name="Moors H."/>
            <person name="Monsieurs P."/>
            <person name="Morin N."/>
            <person name="Michaux A."/>
            <person name="Benotmane M.A."/>
            <person name="Leys N."/>
            <person name="Vallaeys T."/>
            <person name="Lapidus A."/>
            <person name="Monchy S."/>
            <person name="Medigue C."/>
            <person name="Taghavi S."/>
            <person name="McCorkle S."/>
            <person name="Dunn J."/>
            <person name="van der Lelie D."/>
            <person name="Mergeay M."/>
        </authorList>
    </citation>
    <scope>NUCLEOTIDE SEQUENCE [LARGE SCALE GENOMIC DNA]</scope>
    <source>
        <strain>ATCC 43123 / DSM 2839 / NBRC 102507 / CH34</strain>
    </source>
</reference>